<proteinExistence type="inferred from homology"/>
<feature type="chain" id="PRO_0000313232" description="DNA ligase">
    <location>
        <begin position="1"/>
        <end position="671"/>
    </location>
</feature>
<feature type="domain" description="BRCT" evidence="1">
    <location>
        <begin position="593"/>
        <end position="671"/>
    </location>
</feature>
<feature type="active site" description="N6-AMP-lysine intermediate" evidence="1">
    <location>
        <position position="115"/>
    </location>
</feature>
<feature type="binding site" evidence="1">
    <location>
        <begin position="32"/>
        <end position="36"/>
    </location>
    <ligand>
        <name>NAD(+)</name>
        <dbReference type="ChEBI" id="CHEBI:57540"/>
    </ligand>
</feature>
<feature type="binding site" evidence="1">
    <location>
        <begin position="81"/>
        <end position="82"/>
    </location>
    <ligand>
        <name>NAD(+)</name>
        <dbReference type="ChEBI" id="CHEBI:57540"/>
    </ligand>
</feature>
<feature type="binding site" evidence="1">
    <location>
        <position position="113"/>
    </location>
    <ligand>
        <name>NAD(+)</name>
        <dbReference type="ChEBI" id="CHEBI:57540"/>
    </ligand>
</feature>
<feature type="binding site" evidence="1">
    <location>
        <position position="136"/>
    </location>
    <ligand>
        <name>NAD(+)</name>
        <dbReference type="ChEBI" id="CHEBI:57540"/>
    </ligand>
</feature>
<feature type="binding site" evidence="1">
    <location>
        <position position="173"/>
    </location>
    <ligand>
        <name>NAD(+)</name>
        <dbReference type="ChEBI" id="CHEBI:57540"/>
    </ligand>
</feature>
<feature type="binding site" evidence="1">
    <location>
        <position position="290"/>
    </location>
    <ligand>
        <name>NAD(+)</name>
        <dbReference type="ChEBI" id="CHEBI:57540"/>
    </ligand>
</feature>
<feature type="binding site" evidence="1">
    <location>
        <position position="314"/>
    </location>
    <ligand>
        <name>NAD(+)</name>
        <dbReference type="ChEBI" id="CHEBI:57540"/>
    </ligand>
</feature>
<feature type="binding site" evidence="1">
    <location>
        <position position="408"/>
    </location>
    <ligand>
        <name>Zn(2+)</name>
        <dbReference type="ChEBI" id="CHEBI:29105"/>
    </ligand>
</feature>
<feature type="binding site" evidence="1">
    <location>
        <position position="411"/>
    </location>
    <ligand>
        <name>Zn(2+)</name>
        <dbReference type="ChEBI" id="CHEBI:29105"/>
    </ligand>
</feature>
<feature type="binding site" evidence="1">
    <location>
        <position position="426"/>
    </location>
    <ligand>
        <name>Zn(2+)</name>
        <dbReference type="ChEBI" id="CHEBI:29105"/>
    </ligand>
</feature>
<feature type="binding site" evidence="1">
    <location>
        <position position="432"/>
    </location>
    <ligand>
        <name>Zn(2+)</name>
        <dbReference type="ChEBI" id="CHEBI:29105"/>
    </ligand>
</feature>
<organism>
    <name type="scientific">Escherichia coli O157:H7</name>
    <dbReference type="NCBI Taxonomy" id="83334"/>
    <lineage>
        <taxon>Bacteria</taxon>
        <taxon>Pseudomonadati</taxon>
        <taxon>Pseudomonadota</taxon>
        <taxon>Gammaproteobacteria</taxon>
        <taxon>Enterobacterales</taxon>
        <taxon>Enterobacteriaceae</taxon>
        <taxon>Escherichia</taxon>
    </lineage>
</organism>
<evidence type="ECO:0000255" key="1">
    <source>
        <dbReference type="HAMAP-Rule" id="MF_01588"/>
    </source>
</evidence>
<keyword id="KW-0227">DNA damage</keyword>
<keyword id="KW-0234">DNA repair</keyword>
<keyword id="KW-0235">DNA replication</keyword>
<keyword id="KW-0436">Ligase</keyword>
<keyword id="KW-0460">Magnesium</keyword>
<keyword id="KW-0464">Manganese</keyword>
<keyword id="KW-0479">Metal-binding</keyword>
<keyword id="KW-0520">NAD</keyword>
<keyword id="KW-1185">Reference proteome</keyword>
<keyword id="KW-0862">Zinc</keyword>
<accession>Q8XBL5</accession>
<accession>Q7ABT7</accession>
<sequence>MESIEQQLTELRTTLRHHEYLYHVMDAPEIPDAEYDRLMRELRELETKHPELITPDSPTQRVGAAPLAAFSQIRHEVPMLSLDNVFDEESFLAFNKRVQDRLKSNEKVTWCCELKLDGLAVSILYENGVLVSAATRGDGTTGEDITSNVRTIRAIPLKLHGENIPARLEVRGEVFLPQAGFEKINEDARRTGGKVFANPRNAAAGSLRQLDPRITAKRPLTFFCYGVGVLEGGELPDTHLGRLLQFKKWGLPVSDRVTLCESAEEVLAFYHKVEEDRPTLGFDIDGVVIKVNSLEQQEQLGFVARAPRWAVAFKFPAQEQMTFVRDVEFQVGRTGAITPVARLEPVHVAGVLVSNATLHNADEIERLGLRIGDKVVIRRAGDVIPQVVNVVLSERPEDTREVVFPTYCPVCGSDVERVEGEAVARCTGGLICGAQRKESLKHFVSRRAMDVDGMGDKIIDQLVEKEYVHTPADLFKLTAGKLTGLERMGPKSAQNVVNALEKAKETTFARFLYALGIREVGEATAAGLAAYFGTLEALEAASIEELQKVPDVGIVVASHVHNFFAEESNRNVISELLAEGVHWPAPIVINAEEIDSPFAGKTVVLTGSLSQMSRDDAKARLVELGAKVAGSVSKKTDLVIAGEAAGSKLAKAQELGIEVIDEAEMLRLLGS</sequence>
<reference key="1">
    <citation type="journal article" date="2001" name="Nature">
        <title>Genome sequence of enterohaemorrhagic Escherichia coli O157:H7.</title>
        <authorList>
            <person name="Perna N.T."/>
            <person name="Plunkett G. III"/>
            <person name="Burland V."/>
            <person name="Mau B."/>
            <person name="Glasner J.D."/>
            <person name="Rose D.J."/>
            <person name="Mayhew G.F."/>
            <person name="Evans P.S."/>
            <person name="Gregor J."/>
            <person name="Kirkpatrick H.A."/>
            <person name="Posfai G."/>
            <person name="Hackett J."/>
            <person name="Klink S."/>
            <person name="Boutin A."/>
            <person name="Shao Y."/>
            <person name="Miller L."/>
            <person name="Grotbeck E.J."/>
            <person name="Davis N.W."/>
            <person name="Lim A."/>
            <person name="Dimalanta E.T."/>
            <person name="Potamousis K."/>
            <person name="Apodaca J."/>
            <person name="Anantharaman T.S."/>
            <person name="Lin J."/>
            <person name="Yen G."/>
            <person name="Schwartz D.C."/>
            <person name="Welch R.A."/>
            <person name="Blattner F.R."/>
        </authorList>
    </citation>
    <scope>NUCLEOTIDE SEQUENCE [LARGE SCALE GENOMIC DNA]</scope>
    <source>
        <strain>O157:H7 / EDL933 / ATCC 700927 / EHEC</strain>
    </source>
</reference>
<reference key="2">
    <citation type="journal article" date="2001" name="DNA Res.">
        <title>Complete genome sequence of enterohemorrhagic Escherichia coli O157:H7 and genomic comparison with a laboratory strain K-12.</title>
        <authorList>
            <person name="Hayashi T."/>
            <person name="Makino K."/>
            <person name="Ohnishi M."/>
            <person name="Kurokawa K."/>
            <person name="Ishii K."/>
            <person name="Yokoyama K."/>
            <person name="Han C.-G."/>
            <person name="Ohtsubo E."/>
            <person name="Nakayama K."/>
            <person name="Murata T."/>
            <person name="Tanaka M."/>
            <person name="Tobe T."/>
            <person name="Iida T."/>
            <person name="Takami H."/>
            <person name="Honda T."/>
            <person name="Sasakawa C."/>
            <person name="Ogasawara N."/>
            <person name="Yasunaga T."/>
            <person name="Kuhara S."/>
            <person name="Shiba T."/>
            <person name="Hattori M."/>
            <person name="Shinagawa H."/>
        </authorList>
    </citation>
    <scope>NUCLEOTIDE SEQUENCE [LARGE SCALE GENOMIC DNA]</scope>
    <source>
        <strain>O157:H7 / Sakai / RIMD 0509952 / EHEC</strain>
    </source>
</reference>
<name>DNLJ_ECO57</name>
<gene>
    <name evidence="1" type="primary">ligA</name>
    <name type="ordered locus">Z3677</name>
    <name type="ordered locus">ECs3283</name>
</gene>
<dbReference type="EC" id="6.5.1.2" evidence="1"/>
<dbReference type="EMBL" id="AE005174">
    <property type="protein sequence ID" value="AAG57530.1"/>
    <property type="molecule type" value="Genomic_DNA"/>
</dbReference>
<dbReference type="EMBL" id="BA000007">
    <property type="protein sequence ID" value="BAB36706.1"/>
    <property type="molecule type" value="Genomic_DNA"/>
</dbReference>
<dbReference type="PIR" id="C91039">
    <property type="entry name" value="C91039"/>
</dbReference>
<dbReference type="PIR" id="F85883">
    <property type="entry name" value="F85883"/>
</dbReference>
<dbReference type="RefSeq" id="NP_311310.1">
    <property type="nucleotide sequence ID" value="NC_002695.1"/>
</dbReference>
<dbReference type="RefSeq" id="WP_000443697.1">
    <property type="nucleotide sequence ID" value="NZ_VOAI01000001.1"/>
</dbReference>
<dbReference type="SMR" id="Q8XBL5"/>
<dbReference type="STRING" id="155864.Z3677"/>
<dbReference type="GeneID" id="915555"/>
<dbReference type="KEGG" id="ece:Z3677"/>
<dbReference type="KEGG" id="ecs:ECs_3283"/>
<dbReference type="PATRIC" id="fig|386585.9.peg.3430"/>
<dbReference type="eggNOG" id="COG0272">
    <property type="taxonomic scope" value="Bacteria"/>
</dbReference>
<dbReference type="HOGENOM" id="CLU_007764_2_1_6"/>
<dbReference type="OMA" id="HDVEHEI"/>
<dbReference type="Proteomes" id="UP000000558">
    <property type="component" value="Chromosome"/>
</dbReference>
<dbReference type="Proteomes" id="UP000002519">
    <property type="component" value="Chromosome"/>
</dbReference>
<dbReference type="GO" id="GO:0005829">
    <property type="term" value="C:cytosol"/>
    <property type="evidence" value="ECO:0007669"/>
    <property type="project" value="TreeGrafter"/>
</dbReference>
<dbReference type="GO" id="GO:0003677">
    <property type="term" value="F:DNA binding"/>
    <property type="evidence" value="ECO:0007669"/>
    <property type="project" value="InterPro"/>
</dbReference>
<dbReference type="GO" id="GO:0003911">
    <property type="term" value="F:DNA ligase (NAD+) activity"/>
    <property type="evidence" value="ECO:0007669"/>
    <property type="project" value="UniProtKB-UniRule"/>
</dbReference>
<dbReference type="GO" id="GO:0046872">
    <property type="term" value="F:metal ion binding"/>
    <property type="evidence" value="ECO:0007669"/>
    <property type="project" value="UniProtKB-KW"/>
</dbReference>
<dbReference type="GO" id="GO:0006281">
    <property type="term" value="P:DNA repair"/>
    <property type="evidence" value="ECO:0007669"/>
    <property type="project" value="UniProtKB-KW"/>
</dbReference>
<dbReference type="GO" id="GO:0006260">
    <property type="term" value="P:DNA replication"/>
    <property type="evidence" value="ECO:0007669"/>
    <property type="project" value="UniProtKB-KW"/>
</dbReference>
<dbReference type="CDD" id="cd17748">
    <property type="entry name" value="BRCT_DNA_ligase_like"/>
    <property type="match status" value="1"/>
</dbReference>
<dbReference type="CDD" id="cd00114">
    <property type="entry name" value="LIGANc"/>
    <property type="match status" value="1"/>
</dbReference>
<dbReference type="FunFam" id="1.10.150.20:FF:000006">
    <property type="entry name" value="DNA ligase"/>
    <property type="match status" value="1"/>
</dbReference>
<dbReference type="FunFam" id="1.10.150.20:FF:000007">
    <property type="entry name" value="DNA ligase"/>
    <property type="match status" value="1"/>
</dbReference>
<dbReference type="FunFam" id="1.10.287.610:FF:000002">
    <property type="entry name" value="DNA ligase"/>
    <property type="match status" value="1"/>
</dbReference>
<dbReference type="FunFam" id="2.40.50.140:FF:000012">
    <property type="entry name" value="DNA ligase"/>
    <property type="match status" value="1"/>
</dbReference>
<dbReference type="FunFam" id="3.30.470.30:FF:000001">
    <property type="entry name" value="DNA ligase"/>
    <property type="match status" value="1"/>
</dbReference>
<dbReference type="FunFam" id="3.40.50.10190:FF:000004">
    <property type="entry name" value="DNA ligase"/>
    <property type="match status" value="1"/>
</dbReference>
<dbReference type="FunFam" id="6.20.10.30:FF:000001">
    <property type="entry name" value="DNA ligase"/>
    <property type="match status" value="1"/>
</dbReference>
<dbReference type="Gene3D" id="6.20.10.30">
    <property type="match status" value="1"/>
</dbReference>
<dbReference type="Gene3D" id="1.10.150.20">
    <property type="entry name" value="5' to 3' exonuclease, C-terminal subdomain"/>
    <property type="match status" value="2"/>
</dbReference>
<dbReference type="Gene3D" id="3.40.50.10190">
    <property type="entry name" value="BRCT domain"/>
    <property type="match status" value="1"/>
</dbReference>
<dbReference type="Gene3D" id="3.30.470.30">
    <property type="entry name" value="DNA ligase/mRNA capping enzyme"/>
    <property type="match status" value="1"/>
</dbReference>
<dbReference type="Gene3D" id="1.10.287.610">
    <property type="entry name" value="Helix hairpin bin"/>
    <property type="match status" value="1"/>
</dbReference>
<dbReference type="Gene3D" id="2.40.50.140">
    <property type="entry name" value="Nucleic acid-binding proteins"/>
    <property type="match status" value="1"/>
</dbReference>
<dbReference type="HAMAP" id="MF_01588">
    <property type="entry name" value="DNA_ligase_A"/>
    <property type="match status" value="1"/>
</dbReference>
<dbReference type="InterPro" id="IPR001357">
    <property type="entry name" value="BRCT_dom"/>
</dbReference>
<dbReference type="InterPro" id="IPR036420">
    <property type="entry name" value="BRCT_dom_sf"/>
</dbReference>
<dbReference type="InterPro" id="IPR041663">
    <property type="entry name" value="DisA/LigA_HHH"/>
</dbReference>
<dbReference type="InterPro" id="IPR001679">
    <property type="entry name" value="DNA_ligase"/>
</dbReference>
<dbReference type="InterPro" id="IPR018239">
    <property type="entry name" value="DNA_ligase_AS"/>
</dbReference>
<dbReference type="InterPro" id="IPR033136">
    <property type="entry name" value="DNA_ligase_CS"/>
</dbReference>
<dbReference type="InterPro" id="IPR013839">
    <property type="entry name" value="DNAligase_adenylation"/>
</dbReference>
<dbReference type="InterPro" id="IPR013840">
    <property type="entry name" value="DNAligase_N"/>
</dbReference>
<dbReference type="InterPro" id="IPR003583">
    <property type="entry name" value="Hlx-hairpin-Hlx_DNA-bd_motif"/>
</dbReference>
<dbReference type="InterPro" id="IPR012340">
    <property type="entry name" value="NA-bd_OB-fold"/>
</dbReference>
<dbReference type="InterPro" id="IPR004150">
    <property type="entry name" value="NAD_DNA_ligase_OB"/>
</dbReference>
<dbReference type="InterPro" id="IPR010994">
    <property type="entry name" value="RuvA_2-like"/>
</dbReference>
<dbReference type="InterPro" id="IPR004149">
    <property type="entry name" value="Znf_DNAligase_C4"/>
</dbReference>
<dbReference type="NCBIfam" id="TIGR00575">
    <property type="entry name" value="dnlj"/>
    <property type="match status" value="1"/>
</dbReference>
<dbReference type="NCBIfam" id="NF005932">
    <property type="entry name" value="PRK07956.1"/>
    <property type="match status" value="1"/>
</dbReference>
<dbReference type="PANTHER" id="PTHR23389">
    <property type="entry name" value="CHROMOSOME TRANSMISSION FIDELITY FACTOR 18"/>
    <property type="match status" value="1"/>
</dbReference>
<dbReference type="PANTHER" id="PTHR23389:SF9">
    <property type="entry name" value="DNA LIGASE"/>
    <property type="match status" value="1"/>
</dbReference>
<dbReference type="Pfam" id="PF00533">
    <property type="entry name" value="BRCT"/>
    <property type="match status" value="1"/>
</dbReference>
<dbReference type="Pfam" id="PF01653">
    <property type="entry name" value="DNA_ligase_aden"/>
    <property type="match status" value="1"/>
</dbReference>
<dbReference type="Pfam" id="PF03120">
    <property type="entry name" value="DNA_ligase_OB"/>
    <property type="match status" value="1"/>
</dbReference>
<dbReference type="Pfam" id="PF03119">
    <property type="entry name" value="DNA_ligase_ZBD"/>
    <property type="match status" value="1"/>
</dbReference>
<dbReference type="Pfam" id="PF12826">
    <property type="entry name" value="HHH_2"/>
    <property type="match status" value="1"/>
</dbReference>
<dbReference type="Pfam" id="PF14520">
    <property type="entry name" value="HHH_5"/>
    <property type="match status" value="1"/>
</dbReference>
<dbReference type="Pfam" id="PF22745">
    <property type="entry name" value="Nlig-Ia"/>
    <property type="match status" value="1"/>
</dbReference>
<dbReference type="PIRSF" id="PIRSF001604">
    <property type="entry name" value="LigA"/>
    <property type="match status" value="1"/>
</dbReference>
<dbReference type="SMART" id="SM00292">
    <property type="entry name" value="BRCT"/>
    <property type="match status" value="1"/>
</dbReference>
<dbReference type="SMART" id="SM00278">
    <property type="entry name" value="HhH1"/>
    <property type="match status" value="4"/>
</dbReference>
<dbReference type="SMART" id="SM00532">
    <property type="entry name" value="LIGANc"/>
    <property type="match status" value="1"/>
</dbReference>
<dbReference type="SUPFAM" id="SSF52113">
    <property type="entry name" value="BRCT domain"/>
    <property type="match status" value="1"/>
</dbReference>
<dbReference type="SUPFAM" id="SSF56091">
    <property type="entry name" value="DNA ligase/mRNA capping enzyme, catalytic domain"/>
    <property type="match status" value="1"/>
</dbReference>
<dbReference type="SUPFAM" id="SSF50249">
    <property type="entry name" value="Nucleic acid-binding proteins"/>
    <property type="match status" value="1"/>
</dbReference>
<dbReference type="SUPFAM" id="SSF47781">
    <property type="entry name" value="RuvA domain 2-like"/>
    <property type="match status" value="1"/>
</dbReference>
<dbReference type="PROSITE" id="PS50172">
    <property type="entry name" value="BRCT"/>
    <property type="match status" value="1"/>
</dbReference>
<dbReference type="PROSITE" id="PS01055">
    <property type="entry name" value="DNA_LIGASE_N1"/>
    <property type="match status" value="1"/>
</dbReference>
<dbReference type="PROSITE" id="PS01056">
    <property type="entry name" value="DNA_LIGASE_N2"/>
    <property type="match status" value="1"/>
</dbReference>
<comment type="function">
    <text evidence="1">DNA ligase that catalyzes the formation of phosphodiester linkages between 5'-phosphoryl and 3'-hydroxyl groups in double-stranded DNA using NAD as a coenzyme and as the energy source for the reaction. It is essential for DNA replication and repair of damaged DNA.</text>
</comment>
<comment type="catalytic activity">
    <reaction evidence="1">
        <text>NAD(+) + (deoxyribonucleotide)n-3'-hydroxyl + 5'-phospho-(deoxyribonucleotide)m = (deoxyribonucleotide)n+m + AMP + beta-nicotinamide D-nucleotide.</text>
        <dbReference type="EC" id="6.5.1.2"/>
    </reaction>
</comment>
<comment type="cofactor">
    <cofactor evidence="1">
        <name>Mg(2+)</name>
        <dbReference type="ChEBI" id="CHEBI:18420"/>
    </cofactor>
    <cofactor evidence="1">
        <name>Mn(2+)</name>
        <dbReference type="ChEBI" id="CHEBI:29035"/>
    </cofactor>
</comment>
<comment type="similarity">
    <text evidence="1">Belongs to the NAD-dependent DNA ligase family. LigA subfamily.</text>
</comment>
<protein>
    <recommendedName>
        <fullName evidence="1">DNA ligase</fullName>
        <ecNumber evidence="1">6.5.1.2</ecNumber>
    </recommendedName>
    <alternativeName>
        <fullName evidence="1">Polydeoxyribonucleotide synthase [NAD(+)]</fullName>
    </alternativeName>
</protein>